<gene>
    <name evidence="1" type="primary">trmD</name>
    <name type="ordered locus">RALTA_A0807</name>
</gene>
<feature type="chain" id="PRO_1000130157" description="tRNA (guanine-N(1)-)-methyltransferase">
    <location>
        <begin position="1"/>
        <end position="260"/>
    </location>
</feature>
<feature type="binding site" evidence="1">
    <location>
        <position position="117"/>
    </location>
    <ligand>
        <name>S-adenosyl-L-methionine</name>
        <dbReference type="ChEBI" id="CHEBI:59789"/>
    </ligand>
</feature>
<feature type="binding site" evidence="1">
    <location>
        <begin position="137"/>
        <end position="142"/>
    </location>
    <ligand>
        <name>S-adenosyl-L-methionine</name>
        <dbReference type="ChEBI" id="CHEBI:59789"/>
    </ligand>
</feature>
<name>TRMD_CUPTR</name>
<sequence length="260" mass="28737">MQFDVITLFPEMFRALTDWGITSRAAKQQRYALRSWNPRDFTVDNYRTIDDRPYGGGPGMVMLAKPLDDAIDAAVAAQAQAGVAKPHVVLMSPQGKTLTHAKVMELARRPGLVLLCGRYEAIDQRLIDRRVDEEISLGDFVLSGGELPAMALIDAVVRHLPGVLGDAQSAVQDSFVNGLLDCPHYTRPEEYEGVRVPDILLGGHHAEIEKWRRQQALANTASKRPDLIEAAREQGLLTRADEKFLSEWAAKAGRGETPAR</sequence>
<proteinExistence type="inferred from homology"/>
<comment type="function">
    <text evidence="1">Specifically methylates guanosine-37 in various tRNAs.</text>
</comment>
<comment type="catalytic activity">
    <reaction evidence="1">
        <text>guanosine(37) in tRNA + S-adenosyl-L-methionine = N(1)-methylguanosine(37) in tRNA + S-adenosyl-L-homocysteine + H(+)</text>
        <dbReference type="Rhea" id="RHEA:36899"/>
        <dbReference type="Rhea" id="RHEA-COMP:10145"/>
        <dbReference type="Rhea" id="RHEA-COMP:10147"/>
        <dbReference type="ChEBI" id="CHEBI:15378"/>
        <dbReference type="ChEBI" id="CHEBI:57856"/>
        <dbReference type="ChEBI" id="CHEBI:59789"/>
        <dbReference type="ChEBI" id="CHEBI:73542"/>
        <dbReference type="ChEBI" id="CHEBI:74269"/>
        <dbReference type="EC" id="2.1.1.228"/>
    </reaction>
</comment>
<comment type="subunit">
    <text evidence="1">Homodimer.</text>
</comment>
<comment type="subcellular location">
    <subcellularLocation>
        <location evidence="1">Cytoplasm</location>
    </subcellularLocation>
</comment>
<comment type="similarity">
    <text evidence="1">Belongs to the RNA methyltransferase TrmD family.</text>
</comment>
<evidence type="ECO:0000255" key="1">
    <source>
        <dbReference type="HAMAP-Rule" id="MF_00605"/>
    </source>
</evidence>
<dbReference type="EC" id="2.1.1.228" evidence="1"/>
<dbReference type="EMBL" id="CU633749">
    <property type="protein sequence ID" value="CAQ68779.1"/>
    <property type="molecule type" value="Genomic_DNA"/>
</dbReference>
<dbReference type="RefSeq" id="WP_012352116.1">
    <property type="nucleotide sequence ID" value="NC_010528.1"/>
</dbReference>
<dbReference type="SMR" id="B3R398"/>
<dbReference type="GeneID" id="29762360"/>
<dbReference type="KEGG" id="cti:RALTA_A0807"/>
<dbReference type="eggNOG" id="COG0336">
    <property type="taxonomic scope" value="Bacteria"/>
</dbReference>
<dbReference type="HOGENOM" id="CLU_047363_0_2_4"/>
<dbReference type="BioCyc" id="CTAI977880:RALTA_RS03895-MONOMER"/>
<dbReference type="Proteomes" id="UP000001692">
    <property type="component" value="Chromosome 1"/>
</dbReference>
<dbReference type="GO" id="GO:0005829">
    <property type="term" value="C:cytosol"/>
    <property type="evidence" value="ECO:0007669"/>
    <property type="project" value="TreeGrafter"/>
</dbReference>
<dbReference type="GO" id="GO:0052906">
    <property type="term" value="F:tRNA (guanine(37)-N1)-methyltransferase activity"/>
    <property type="evidence" value="ECO:0007669"/>
    <property type="project" value="UniProtKB-UniRule"/>
</dbReference>
<dbReference type="GO" id="GO:0002939">
    <property type="term" value="P:tRNA N1-guanine methylation"/>
    <property type="evidence" value="ECO:0007669"/>
    <property type="project" value="TreeGrafter"/>
</dbReference>
<dbReference type="CDD" id="cd18080">
    <property type="entry name" value="TrmD-like"/>
    <property type="match status" value="1"/>
</dbReference>
<dbReference type="FunFam" id="1.10.1270.20:FF:000001">
    <property type="entry name" value="tRNA (guanine-N(1)-)-methyltransferase"/>
    <property type="match status" value="1"/>
</dbReference>
<dbReference type="FunFam" id="3.40.1280.10:FF:000001">
    <property type="entry name" value="tRNA (guanine-N(1)-)-methyltransferase"/>
    <property type="match status" value="1"/>
</dbReference>
<dbReference type="Gene3D" id="3.40.1280.10">
    <property type="match status" value="1"/>
</dbReference>
<dbReference type="Gene3D" id="1.10.1270.20">
    <property type="entry name" value="tRNA(m1g37)methyltransferase, domain 2"/>
    <property type="match status" value="1"/>
</dbReference>
<dbReference type="HAMAP" id="MF_00605">
    <property type="entry name" value="TrmD"/>
    <property type="match status" value="1"/>
</dbReference>
<dbReference type="InterPro" id="IPR029028">
    <property type="entry name" value="Alpha/beta_knot_MTases"/>
</dbReference>
<dbReference type="InterPro" id="IPR023148">
    <property type="entry name" value="tRNA_m1G_MeTrfase_C_sf"/>
</dbReference>
<dbReference type="InterPro" id="IPR002649">
    <property type="entry name" value="tRNA_m1G_MeTrfase_TrmD"/>
</dbReference>
<dbReference type="InterPro" id="IPR029026">
    <property type="entry name" value="tRNA_m1G_MTases_N"/>
</dbReference>
<dbReference type="InterPro" id="IPR016009">
    <property type="entry name" value="tRNA_MeTrfase_TRMD/TRM10"/>
</dbReference>
<dbReference type="NCBIfam" id="NF000648">
    <property type="entry name" value="PRK00026.1"/>
    <property type="match status" value="1"/>
</dbReference>
<dbReference type="NCBIfam" id="TIGR00088">
    <property type="entry name" value="trmD"/>
    <property type="match status" value="1"/>
</dbReference>
<dbReference type="PANTHER" id="PTHR46417">
    <property type="entry name" value="TRNA (GUANINE-N(1)-)-METHYLTRANSFERASE"/>
    <property type="match status" value="1"/>
</dbReference>
<dbReference type="PANTHER" id="PTHR46417:SF1">
    <property type="entry name" value="TRNA (GUANINE-N(1)-)-METHYLTRANSFERASE"/>
    <property type="match status" value="1"/>
</dbReference>
<dbReference type="Pfam" id="PF01746">
    <property type="entry name" value="tRNA_m1G_MT"/>
    <property type="match status" value="1"/>
</dbReference>
<dbReference type="PIRSF" id="PIRSF000386">
    <property type="entry name" value="tRNA_mtase"/>
    <property type="match status" value="1"/>
</dbReference>
<dbReference type="SUPFAM" id="SSF75217">
    <property type="entry name" value="alpha/beta knot"/>
    <property type="match status" value="1"/>
</dbReference>
<organism>
    <name type="scientific">Cupriavidus taiwanensis (strain DSM 17343 / BCRC 17206 / CCUG 44338 / CIP 107171 / LMG 19424 / R1)</name>
    <name type="common">Ralstonia taiwanensis (strain LMG 19424)</name>
    <dbReference type="NCBI Taxonomy" id="977880"/>
    <lineage>
        <taxon>Bacteria</taxon>
        <taxon>Pseudomonadati</taxon>
        <taxon>Pseudomonadota</taxon>
        <taxon>Betaproteobacteria</taxon>
        <taxon>Burkholderiales</taxon>
        <taxon>Burkholderiaceae</taxon>
        <taxon>Cupriavidus</taxon>
    </lineage>
</organism>
<reference key="1">
    <citation type="journal article" date="2008" name="Genome Res.">
        <title>Genome sequence of the beta-rhizobium Cupriavidus taiwanensis and comparative genomics of rhizobia.</title>
        <authorList>
            <person name="Amadou C."/>
            <person name="Pascal G."/>
            <person name="Mangenot S."/>
            <person name="Glew M."/>
            <person name="Bontemps C."/>
            <person name="Capela D."/>
            <person name="Carrere S."/>
            <person name="Cruveiller S."/>
            <person name="Dossat C."/>
            <person name="Lajus A."/>
            <person name="Marchetti M."/>
            <person name="Poinsot V."/>
            <person name="Rouy Z."/>
            <person name="Servin B."/>
            <person name="Saad M."/>
            <person name="Schenowitz C."/>
            <person name="Barbe V."/>
            <person name="Batut J."/>
            <person name="Medigue C."/>
            <person name="Masson-Boivin C."/>
        </authorList>
    </citation>
    <scope>NUCLEOTIDE SEQUENCE [LARGE SCALE GENOMIC DNA]</scope>
    <source>
        <strain>DSM 17343 / BCRC 17206 / CCUG 44338 / CIP 107171 / LMG 19424 / R1</strain>
    </source>
</reference>
<accession>B3R398</accession>
<protein>
    <recommendedName>
        <fullName evidence="1">tRNA (guanine-N(1)-)-methyltransferase</fullName>
        <ecNumber evidence="1">2.1.1.228</ecNumber>
    </recommendedName>
    <alternativeName>
        <fullName evidence="1">M1G-methyltransferase</fullName>
    </alternativeName>
    <alternativeName>
        <fullName evidence="1">tRNA [GM37] methyltransferase</fullName>
    </alternativeName>
</protein>
<keyword id="KW-0963">Cytoplasm</keyword>
<keyword id="KW-0489">Methyltransferase</keyword>
<keyword id="KW-0949">S-adenosyl-L-methionine</keyword>
<keyword id="KW-0808">Transferase</keyword>
<keyword id="KW-0819">tRNA processing</keyword>